<keyword id="KW-0963">Cytoplasm</keyword>
<keyword id="KW-0238">DNA-binding</keyword>
<keyword id="KW-0479">Metal-binding</keyword>
<keyword id="KW-0539">Nucleus</keyword>
<keyword id="KW-1185">Reference proteome</keyword>
<keyword id="KW-0804">Transcription</keyword>
<keyword id="KW-0805">Transcription regulation</keyword>
<keyword id="KW-0862">Zinc</keyword>
<keyword id="KW-0863">Zinc-finger</keyword>
<organism>
    <name type="scientific">Xenopus laevis</name>
    <name type="common">African clawed frog</name>
    <dbReference type="NCBI Taxonomy" id="8355"/>
    <lineage>
        <taxon>Eukaryota</taxon>
        <taxon>Metazoa</taxon>
        <taxon>Chordata</taxon>
        <taxon>Craniata</taxon>
        <taxon>Vertebrata</taxon>
        <taxon>Euteleostomi</taxon>
        <taxon>Amphibia</taxon>
        <taxon>Batrachia</taxon>
        <taxon>Anura</taxon>
        <taxon>Pipoidea</taxon>
        <taxon>Pipidae</taxon>
        <taxon>Xenopodinae</taxon>
        <taxon>Xenopus</taxon>
        <taxon>Xenopus</taxon>
    </lineage>
</organism>
<sequence length="498" mass="54317">MASMLSKRLGKRSLLGARVCAPTLSGDGMLVDGQMSIQAEISGGFGAGALEGGYCKEFPEDGSCASAMSPTNRFKLYPGQKVYITHNGKEYVGLVEQHNHVDDEVKLFVLELGLHLCRKMEDVRLAETQKPLSSPIEQSLPTSPGATSTSAQRSVSRSIDVPKRRSDAVEMDEMMAAMVLTSLSCSPIVQSPPCTDSIPAPRVTCDLWKEGGDVSDSGSSTTSGHWSASSGVSTPSPPHTDASPKYTSEVFSASHVDEGFETDPDPFLLDEPAPRKRKNSVKIMYKCLWPNCGKLLRSIVGIKRHVKTQHLGDGLDSDQRKREEDFYYTEVQMKEDPEAEPTPKSPSSATAPLLIQPVPAKPETHAIEVPSVESPLSSALSQSAPGSFWHIQTDHAYQALSSIQIPVSPHIFTSISWAAASSTIPTLSPIRSRSLSFSEQQQQAIKSHLIVASPPRPSNGNRKIRGEAKKCRKVYGIEHRDQWCTACRWKKACQRFLD</sequence>
<accession>Q6DFC8</accession>
<protein>
    <recommendedName>
        <fullName>Zinc finger protein 395</fullName>
    </recommendedName>
</protein>
<gene>
    <name type="primary">znf395</name>
</gene>
<dbReference type="EMBL" id="BC076811">
    <property type="protein sequence ID" value="AAH76811.1"/>
    <property type="molecule type" value="mRNA"/>
</dbReference>
<dbReference type="RefSeq" id="NP_001086563.1">
    <property type="nucleotide sequence ID" value="NM_001093094.1"/>
</dbReference>
<dbReference type="SMR" id="Q6DFC8"/>
<dbReference type="DNASU" id="446398"/>
<dbReference type="GeneID" id="446398"/>
<dbReference type="KEGG" id="xla:446398"/>
<dbReference type="AGR" id="Xenbase:XB-GENE-1218962"/>
<dbReference type="CTD" id="446398"/>
<dbReference type="Xenbase" id="XB-GENE-1218962">
    <property type="gene designation" value="znf395.S"/>
</dbReference>
<dbReference type="OrthoDB" id="5950721at2759"/>
<dbReference type="Proteomes" id="UP000186698">
    <property type="component" value="Chromosome 5S"/>
</dbReference>
<dbReference type="Bgee" id="446398">
    <property type="expression patterns" value="Expressed in blastula and 19 other cell types or tissues"/>
</dbReference>
<dbReference type="GO" id="GO:0005737">
    <property type="term" value="C:cytoplasm"/>
    <property type="evidence" value="ECO:0007669"/>
    <property type="project" value="UniProtKB-SubCell"/>
</dbReference>
<dbReference type="GO" id="GO:0005634">
    <property type="term" value="C:nucleus"/>
    <property type="evidence" value="ECO:0000318"/>
    <property type="project" value="GO_Central"/>
</dbReference>
<dbReference type="GO" id="GO:0003700">
    <property type="term" value="F:DNA-binding transcription factor activity"/>
    <property type="evidence" value="ECO:0000318"/>
    <property type="project" value="GO_Central"/>
</dbReference>
<dbReference type="GO" id="GO:0000978">
    <property type="term" value="F:RNA polymerase II cis-regulatory region sequence-specific DNA binding"/>
    <property type="evidence" value="ECO:0000318"/>
    <property type="project" value="GO_Central"/>
</dbReference>
<dbReference type="GO" id="GO:0008270">
    <property type="term" value="F:zinc ion binding"/>
    <property type="evidence" value="ECO:0007669"/>
    <property type="project" value="UniProtKB-KW"/>
</dbReference>
<dbReference type="GO" id="GO:0006357">
    <property type="term" value="P:regulation of transcription by RNA polymerase II"/>
    <property type="evidence" value="ECO:0000318"/>
    <property type="project" value="GO_Central"/>
</dbReference>
<dbReference type="InterPro" id="IPR052253">
    <property type="entry name" value="CR1/CR2-DNA-binding_regulator"/>
</dbReference>
<dbReference type="InterPro" id="IPR031940">
    <property type="entry name" value="DUF4772"/>
</dbReference>
<dbReference type="InterPro" id="IPR013087">
    <property type="entry name" value="Znf_C2H2_type"/>
</dbReference>
<dbReference type="PANTHER" id="PTHR13006">
    <property type="entry name" value="PAPILLOMAVIRUS REGULATORY FACTOR PRF-1"/>
    <property type="match status" value="1"/>
</dbReference>
<dbReference type="PANTHER" id="PTHR13006:SF6">
    <property type="entry name" value="ZINC FINGER PROTEIN 395"/>
    <property type="match status" value="1"/>
</dbReference>
<dbReference type="Pfam" id="PF15997">
    <property type="entry name" value="DUF4772"/>
    <property type="match status" value="1"/>
</dbReference>
<dbReference type="SMART" id="SM01366">
    <property type="entry name" value="c-clamp"/>
    <property type="match status" value="1"/>
</dbReference>
<dbReference type="PROSITE" id="PS00028">
    <property type="entry name" value="ZINC_FINGER_C2H2_1"/>
    <property type="match status" value="1"/>
</dbReference>
<dbReference type="PROSITE" id="PS50157">
    <property type="entry name" value="ZINC_FINGER_C2H2_2"/>
    <property type="match status" value="1"/>
</dbReference>
<name>ZN395_XENLA</name>
<feature type="chain" id="PRO_0000047562" description="Zinc finger protein 395">
    <location>
        <begin position="1"/>
        <end position="498"/>
    </location>
</feature>
<feature type="zinc finger region" description="C2H2-type" evidence="2">
    <location>
        <begin position="285"/>
        <end position="310"/>
    </location>
</feature>
<feature type="region of interest" description="Disordered" evidence="3">
    <location>
        <begin position="129"/>
        <end position="165"/>
    </location>
</feature>
<feature type="region of interest" description="Disordered" evidence="3">
    <location>
        <begin position="209"/>
        <end position="245"/>
    </location>
</feature>
<feature type="short sequence motif" description="Nuclear export signal" evidence="1">
    <location>
        <begin position="171"/>
        <end position="180"/>
    </location>
</feature>
<feature type="compositionally biased region" description="Polar residues" evidence="3">
    <location>
        <begin position="130"/>
        <end position="157"/>
    </location>
</feature>
<feature type="compositionally biased region" description="Low complexity" evidence="3">
    <location>
        <begin position="214"/>
        <end position="231"/>
    </location>
</feature>
<evidence type="ECO:0000250" key="1"/>
<evidence type="ECO:0000255" key="2">
    <source>
        <dbReference type="PROSITE-ProRule" id="PRU00042"/>
    </source>
</evidence>
<evidence type="ECO:0000256" key="3">
    <source>
        <dbReference type="SAM" id="MobiDB-lite"/>
    </source>
</evidence>
<proteinExistence type="evidence at transcript level"/>
<reference key="1">
    <citation type="submission" date="2004-07" db="EMBL/GenBank/DDBJ databases">
        <authorList>
            <consortium name="NIH - Xenopus Gene Collection (XGC) project"/>
        </authorList>
    </citation>
    <scope>NUCLEOTIDE SEQUENCE [LARGE SCALE MRNA]</scope>
    <source>
        <tissue>Oocyte</tissue>
    </source>
</reference>
<comment type="subcellular location">
    <subcellularLocation>
        <location evidence="1">Cytoplasm</location>
    </subcellularLocation>
    <subcellularLocation>
        <location evidence="1">Nucleus</location>
    </subcellularLocation>
    <text evidence="1">May shuttle between nucleus and cytoplasm.</text>
</comment>